<keyword id="KW-0341">Growth regulation</keyword>
<keyword id="KW-1185">Reference proteome</keyword>
<name>NGR_MEDTR</name>
<protein>
    <recommendedName>
        <fullName evidence="3">Protein NEGATIVE GRAVITROPIC RESPONSE OF ROOTS</fullName>
    </recommendedName>
    <alternativeName>
        <fullName evidence="3">MtNGR</fullName>
    </alternativeName>
</protein>
<gene>
    <name evidence="3" type="primary">NGR</name>
    <name evidence="5" type="ordered locus">MTR_8g021237</name>
    <name evidence="6" type="ORF">MtrunA17_Chr8g0344431</name>
</gene>
<accession>A0A072TLV8</accession>
<evidence type="ECO:0000256" key="1">
    <source>
        <dbReference type="SAM" id="MobiDB-lite"/>
    </source>
</evidence>
<evidence type="ECO:0000269" key="2">
    <source>
    </source>
</evidence>
<evidence type="ECO:0000303" key="3">
    <source>
    </source>
</evidence>
<evidence type="ECO:0000305" key="4"/>
<evidence type="ECO:0000312" key="5">
    <source>
        <dbReference type="EMBL" id="KEH18489.1"/>
    </source>
</evidence>
<evidence type="ECO:0000312" key="6">
    <source>
        <dbReference type="EMBL" id="RHN39496.1"/>
    </source>
</evidence>
<comment type="function">
    <text evidence="2">Involved in the control of root gravitropism.</text>
</comment>
<comment type="disruption phenotype">
    <text evidence="2">Roots exhibit a negative gravitropic response, and grow upward in the opposite direrction of root gravitropism.</text>
</comment>
<comment type="similarity">
    <text evidence="4">Belongs to the LAZY family.</text>
</comment>
<dbReference type="EMBL" id="KT021795">
    <property type="protein sequence ID" value="ANJ86422.1"/>
    <property type="molecule type" value="mRNA"/>
</dbReference>
<dbReference type="EMBL" id="CM001224">
    <property type="protein sequence ID" value="KEH18489.1"/>
    <property type="molecule type" value="Genomic_DNA"/>
</dbReference>
<dbReference type="EMBL" id="PSQE01000008">
    <property type="protein sequence ID" value="RHN39496.1"/>
    <property type="molecule type" value="Genomic_DNA"/>
</dbReference>
<dbReference type="RefSeq" id="NP_001411993.1">
    <property type="nucleotide sequence ID" value="NM_001425064.1"/>
</dbReference>
<dbReference type="RefSeq" id="XP_013444464.1">
    <property type="nucleotide sequence ID" value="XM_013589010.1"/>
</dbReference>
<dbReference type="SMR" id="A0A072TLV8"/>
<dbReference type="STRING" id="3880.A0A072TLV8"/>
<dbReference type="EnsemblPlants" id="rna45523">
    <property type="protein sequence ID" value="RHN39496.1"/>
    <property type="gene ID" value="gene45523"/>
</dbReference>
<dbReference type="GeneID" id="25500557"/>
<dbReference type="Gramene" id="rna45523">
    <property type="protein sequence ID" value="RHN39496.1"/>
    <property type="gene ID" value="gene45523"/>
</dbReference>
<dbReference type="KEGG" id="mtr:25500557"/>
<dbReference type="HOGENOM" id="CLU_068790_0_0_1"/>
<dbReference type="OrthoDB" id="1729737at2759"/>
<dbReference type="Proteomes" id="UP000002051">
    <property type="component" value="Chromosome 8"/>
</dbReference>
<dbReference type="Proteomes" id="UP000265566">
    <property type="component" value="Chromosome 8"/>
</dbReference>
<dbReference type="GO" id="GO:0009958">
    <property type="term" value="P:positive gravitropism"/>
    <property type="evidence" value="ECO:0000315"/>
    <property type="project" value="UniProtKB"/>
</dbReference>
<dbReference type="GO" id="GO:0040008">
    <property type="term" value="P:regulation of growth"/>
    <property type="evidence" value="ECO:0007669"/>
    <property type="project" value="InterPro"/>
</dbReference>
<dbReference type="InterPro" id="IPR044683">
    <property type="entry name" value="LAZY"/>
</dbReference>
<dbReference type="PANTHER" id="PTHR34045">
    <property type="entry name" value="OS03G0406300 PROTEIN"/>
    <property type="match status" value="1"/>
</dbReference>
<dbReference type="PANTHER" id="PTHR34045:SF3">
    <property type="entry name" value="PROTEIN LAZY 4"/>
    <property type="match status" value="1"/>
</dbReference>
<reference key="1">
    <citation type="journal article" date="2016" name="Nat. Plants">
        <title>Negative gravitropism in plant roots.</title>
        <authorList>
            <person name="Ge L."/>
            <person name="Chen R."/>
        </authorList>
    </citation>
    <scope>FUNCTION</scope>
    <scope>DISRUPTION PHENOTYPE</scope>
</reference>
<reference key="2">
    <citation type="journal article" date="2011" name="Nature">
        <title>The Medicago genome provides insight into the evolution of rhizobial symbioses.</title>
        <authorList>
            <person name="Young N.D."/>
            <person name="Debelle F."/>
            <person name="Oldroyd G.E.D."/>
            <person name="Geurts R."/>
            <person name="Cannon S.B."/>
            <person name="Udvardi M.K."/>
            <person name="Benedito V.A."/>
            <person name="Mayer K.F.X."/>
            <person name="Gouzy J."/>
            <person name="Schoof H."/>
            <person name="Van de Peer Y."/>
            <person name="Proost S."/>
            <person name="Cook D.R."/>
            <person name="Meyers B.C."/>
            <person name="Spannagl M."/>
            <person name="Cheung F."/>
            <person name="De Mita S."/>
            <person name="Krishnakumar V."/>
            <person name="Gundlach H."/>
            <person name="Zhou S."/>
            <person name="Mudge J."/>
            <person name="Bharti A.K."/>
            <person name="Murray J.D."/>
            <person name="Naoumkina M.A."/>
            <person name="Rosen B."/>
            <person name="Silverstein K.A.T."/>
            <person name="Tang H."/>
            <person name="Rombauts S."/>
            <person name="Zhao P.X."/>
            <person name="Zhou P."/>
            <person name="Barbe V."/>
            <person name="Bardou P."/>
            <person name="Bechner M."/>
            <person name="Bellec A."/>
            <person name="Berger A."/>
            <person name="Berges H."/>
            <person name="Bidwell S."/>
            <person name="Bisseling T."/>
            <person name="Choisne N."/>
            <person name="Couloux A."/>
            <person name="Denny R."/>
            <person name="Deshpande S."/>
            <person name="Dai X."/>
            <person name="Doyle J.J."/>
            <person name="Dudez A.-M."/>
            <person name="Farmer A.D."/>
            <person name="Fouteau S."/>
            <person name="Franken C."/>
            <person name="Gibelin C."/>
            <person name="Gish J."/>
            <person name="Goldstein S."/>
            <person name="Gonzalez A.J."/>
            <person name="Green P.J."/>
            <person name="Hallab A."/>
            <person name="Hartog M."/>
            <person name="Hua A."/>
            <person name="Humphray S.J."/>
            <person name="Jeong D.-H."/>
            <person name="Jing Y."/>
            <person name="Jocker A."/>
            <person name="Kenton S.M."/>
            <person name="Kim D.-J."/>
            <person name="Klee K."/>
            <person name="Lai H."/>
            <person name="Lang C."/>
            <person name="Lin S."/>
            <person name="Macmil S.L."/>
            <person name="Magdelenat G."/>
            <person name="Matthews L."/>
            <person name="McCorrison J."/>
            <person name="Monaghan E.L."/>
            <person name="Mun J.-H."/>
            <person name="Najar F.Z."/>
            <person name="Nicholson C."/>
            <person name="Noirot C."/>
            <person name="O'Bleness M."/>
            <person name="Paule C.R."/>
            <person name="Poulain J."/>
            <person name="Prion F."/>
            <person name="Qin B."/>
            <person name="Qu C."/>
            <person name="Retzel E.F."/>
            <person name="Riddle C."/>
            <person name="Sallet E."/>
            <person name="Samain S."/>
            <person name="Samson N."/>
            <person name="Sanders I."/>
            <person name="Saurat O."/>
            <person name="Scarpelli C."/>
            <person name="Schiex T."/>
            <person name="Segurens B."/>
            <person name="Severin A.J."/>
            <person name="Sherrier D.J."/>
            <person name="Shi R."/>
            <person name="Sims S."/>
            <person name="Singer S.R."/>
            <person name="Sinharoy S."/>
            <person name="Sterck L."/>
            <person name="Viollet A."/>
            <person name="Wang B.-B."/>
            <person name="Wang K."/>
            <person name="Wang M."/>
            <person name="Wang X."/>
            <person name="Warfsmann J."/>
            <person name="Weissenbach J."/>
            <person name="White D.D."/>
            <person name="White J.D."/>
            <person name="Wiley G.B."/>
            <person name="Wincker P."/>
            <person name="Xing Y."/>
            <person name="Yang L."/>
            <person name="Yao Z."/>
            <person name="Ying F."/>
            <person name="Zhai J."/>
            <person name="Zhou L."/>
            <person name="Zuber A."/>
            <person name="Denarie J."/>
            <person name="Dixon R.A."/>
            <person name="May G.D."/>
            <person name="Schwartz D.C."/>
            <person name="Rogers J."/>
            <person name="Quetier F."/>
            <person name="Town C.D."/>
            <person name="Roe B.A."/>
        </authorList>
    </citation>
    <scope>NUCLEOTIDE SEQUENCE [LARGE SCALE GENOMIC DNA]</scope>
    <source>
        <strain>cv. Jemalong A17</strain>
    </source>
</reference>
<reference key="3">
    <citation type="journal article" date="2014" name="BMC Genomics">
        <title>An improved genome release (version Mt4.0) for the model legume Medicago truncatula.</title>
        <authorList>
            <person name="Tang H."/>
            <person name="Krishnakumar V."/>
            <person name="Bidwell S."/>
            <person name="Rosen B."/>
            <person name="Chan A."/>
            <person name="Zhou S."/>
            <person name="Gentzbittel L."/>
            <person name="Childs K.L."/>
            <person name="Yandell M."/>
            <person name="Gundlach H."/>
            <person name="Mayer K.F."/>
            <person name="Schwartz D.C."/>
            <person name="Town C.D."/>
        </authorList>
    </citation>
    <scope>GENOME REANNOTATION</scope>
    <source>
        <strain>cv. Jemalong A17</strain>
    </source>
</reference>
<reference key="4">
    <citation type="journal article" date="2018" name="Nat. Plants">
        <title>Whole-genome landscape of Medicago truncatula symbiotic genes.</title>
        <authorList>
            <person name="Pecrix Y."/>
            <person name="Staton S.E."/>
            <person name="Sallet E."/>
            <person name="Lelandais-Briere C."/>
            <person name="Moreau S."/>
            <person name="Carrere S."/>
            <person name="Blein T."/>
            <person name="Jardinaud M.F."/>
            <person name="Latrasse D."/>
            <person name="Zouine M."/>
            <person name="Zahm M."/>
            <person name="Kreplak J."/>
            <person name="Mayjonade B."/>
            <person name="Satge C."/>
            <person name="Perez M."/>
            <person name="Cauet S."/>
            <person name="Marande W."/>
            <person name="Chantry-Darmon C."/>
            <person name="Lopez-Roques C."/>
            <person name="Bouchez O."/>
            <person name="Berard A."/>
            <person name="Debelle F."/>
            <person name="Munos S."/>
            <person name="Bendahmane A."/>
            <person name="Berges H."/>
            <person name="Niebel A."/>
            <person name="Buitink J."/>
            <person name="Frugier F."/>
            <person name="Benhamed M."/>
            <person name="Crespi M."/>
            <person name="Gouzy J."/>
            <person name="Gamas P."/>
        </authorList>
    </citation>
    <scope>NUCLEOTIDE SEQUENCE [LARGE SCALE GENOMIC DNA]</scope>
    <source>
        <strain>cv. Jemalong A17</strain>
    </source>
</reference>
<feature type="chain" id="PRO_0000451021" description="Protein NEGATIVE GRAVITROPIC RESPONSE OF ROOTS">
    <location>
        <begin position="1"/>
        <end position="262"/>
    </location>
</feature>
<feature type="region of interest" description="Disordered" evidence="1">
    <location>
        <begin position="1"/>
        <end position="40"/>
    </location>
</feature>
<feature type="short sequence motif" description="IGT motif" evidence="4">
    <location>
        <begin position="43"/>
        <end position="49"/>
    </location>
</feature>
<proteinExistence type="evidence at transcript level"/>
<organism>
    <name type="scientific">Medicago truncatula</name>
    <name type="common">Barrel medic</name>
    <name type="synonym">Medicago tribuloides</name>
    <dbReference type="NCBI Taxonomy" id="3880"/>
    <lineage>
        <taxon>Eukaryota</taxon>
        <taxon>Viridiplantae</taxon>
        <taxon>Streptophyta</taxon>
        <taxon>Embryophyta</taxon>
        <taxon>Tracheophyta</taxon>
        <taxon>Spermatophyta</taxon>
        <taxon>Magnoliopsida</taxon>
        <taxon>eudicotyledons</taxon>
        <taxon>Gunneridae</taxon>
        <taxon>Pentapetalae</taxon>
        <taxon>rosids</taxon>
        <taxon>fabids</taxon>
        <taxon>Fabales</taxon>
        <taxon>Fabaceae</taxon>
        <taxon>Papilionoideae</taxon>
        <taxon>50 kb inversion clade</taxon>
        <taxon>NPAAA clade</taxon>
        <taxon>Hologalegina</taxon>
        <taxon>IRL clade</taxon>
        <taxon>Trifolieae</taxon>
        <taxon>Medicago</taxon>
    </lineage>
</organism>
<sequence>MKFFNWMQNKLGGKQENRKSNTSTSTTYAKPEPREEFSDWPHSLLAIGTFGNNNEITQNIENQNTQQEDPSSSEEVPDFTPEEIGKLQKELTRLLRRKPNVEKEISELPLDRFLNCPSSLEVDRRISNALCSESGGDKDEDIEKTLSVILDKCKDICAEKSKKSIGKKSISFLLKKMFVCRSGFAPTPSLRDTLQESRMEKLLRTMLHKKLYTQNNSRAPVLKKCLENKKSIKKRNEDEAEERIDEGSKWVKTDSEYIVLEI</sequence>